<proteinExistence type="evidence at protein level"/>
<dbReference type="EMBL" id="AF211891">
    <property type="protein sequence ID" value="AAG35776.1"/>
    <property type="molecule type" value="mRNA"/>
</dbReference>
<dbReference type="EMBL" id="AF218357">
    <property type="protein sequence ID" value="AAK01479.1"/>
    <property type="molecule type" value="Genomic_DNA"/>
</dbReference>
<dbReference type="EMBL" id="AL592045">
    <property type="status" value="NOT_ANNOTATED_CDS"/>
    <property type="molecule type" value="Genomic_DNA"/>
</dbReference>
<dbReference type="EMBL" id="CH471098">
    <property type="protein sequence ID" value="EAW69778.1"/>
    <property type="molecule type" value="Genomic_DNA"/>
</dbReference>
<dbReference type="EMBL" id="BC111974">
    <property type="protein sequence ID" value="AAI11975.1"/>
    <property type="molecule type" value="mRNA"/>
</dbReference>
<dbReference type="EMBL" id="BC113441">
    <property type="protein sequence ID" value="AAI13442.1"/>
    <property type="molecule type" value="mRNA"/>
</dbReference>
<dbReference type="EMBL" id="BC143784">
    <property type="protein sequence ID" value="AAI43785.1"/>
    <property type="molecule type" value="mRNA"/>
</dbReference>
<dbReference type="CCDS" id="CCDS1552.1">
    <molecule id="Q9H2W2-1"/>
</dbReference>
<dbReference type="CCDS" id="CCDS60432.1">
    <molecule id="Q9H2W2-2"/>
</dbReference>
<dbReference type="RefSeq" id="NP_001269331.1">
    <molecule id="Q9H2W2-2"/>
    <property type="nucleotide sequence ID" value="NM_001282402.2"/>
</dbReference>
<dbReference type="RefSeq" id="NP_114150.1">
    <molecule id="Q9H2W2-1"/>
    <property type="nucleotide sequence ID" value="NM_031944.3"/>
</dbReference>
<dbReference type="SMR" id="Q9H2W2"/>
<dbReference type="FunCoup" id="Q9H2W2">
    <property type="interactions" value="503"/>
</dbReference>
<dbReference type="IntAct" id="Q9H2W2">
    <property type="interactions" value="1"/>
</dbReference>
<dbReference type="STRING" id="9606.ENSP00000442439"/>
<dbReference type="GlyGen" id="Q9H2W2">
    <property type="glycosylation" value="1 site, 1 O-linked glycan (1 site)"/>
</dbReference>
<dbReference type="iPTMnet" id="Q9H2W2"/>
<dbReference type="PhosphoSitePlus" id="Q9H2W2"/>
<dbReference type="BioMuta" id="MIXL1"/>
<dbReference type="DMDM" id="74762734"/>
<dbReference type="MassIVE" id="Q9H2W2"/>
<dbReference type="PaxDb" id="9606-ENSP00000442439"/>
<dbReference type="PeptideAtlas" id="Q9H2W2"/>
<dbReference type="ProteomicsDB" id="7224"/>
<dbReference type="ProteomicsDB" id="80609">
    <molecule id="Q9H2W2-1"/>
</dbReference>
<dbReference type="Antibodypedia" id="20764">
    <property type="antibodies" value="154 antibodies from 31 providers"/>
</dbReference>
<dbReference type="DNASU" id="83881"/>
<dbReference type="Ensembl" id="ENST00000366810.6">
    <molecule id="Q9H2W2-1"/>
    <property type="protein sequence ID" value="ENSP00000355775.4"/>
    <property type="gene ID" value="ENSG00000185155.12"/>
</dbReference>
<dbReference type="Ensembl" id="ENST00000542034.5">
    <molecule id="Q9H2W2-2"/>
    <property type="protein sequence ID" value="ENSP00000442439.1"/>
    <property type="gene ID" value="ENSG00000185155.12"/>
</dbReference>
<dbReference type="GeneID" id="83881"/>
<dbReference type="KEGG" id="hsa:83881"/>
<dbReference type="MANE-Select" id="ENST00000366810.6">
    <property type="protein sequence ID" value="ENSP00000355775.4"/>
    <property type="RefSeq nucleotide sequence ID" value="NM_031944.3"/>
    <property type="RefSeq protein sequence ID" value="NP_114150.1"/>
</dbReference>
<dbReference type="UCSC" id="uc010pvm.4">
    <molecule id="Q9H2W2-1"/>
    <property type="organism name" value="human"/>
</dbReference>
<dbReference type="AGR" id="HGNC:13363"/>
<dbReference type="CTD" id="83881"/>
<dbReference type="DisGeNET" id="83881"/>
<dbReference type="GeneCards" id="MIXL1"/>
<dbReference type="HGNC" id="HGNC:13363">
    <property type="gene designation" value="MIXL1"/>
</dbReference>
<dbReference type="HPA" id="ENSG00000185155">
    <property type="expression patterns" value="Tissue enhanced (lymphoid)"/>
</dbReference>
<dbReference type="MIM" id="609852">
    <property type="type" value="gene"/>
</dbReference>
<dbReference type="neXtProt" id="NX_Q9H2W2"/>
<dbReference type="OpenTargets" id="ENSG00000185155"/>
<dbReference type="PharmGKB" id="PA134976348"/>
<dbReference type="VEuPathDB" id="HostDB:ENSG00000185155"/>
<dbReference type="eggNOG" id="KOG0849">
    <property type="taxonomic scope" value="Eukaryota"/>
</dbReference>
<dbReference type="GeneTree" id="ENSGT00940000162190"/>
<dbReference type="HOGENOM" id="CLU_104890_0_0_1"/>
<dbReference type="InParanoid" id="Q9H2W2"/>
<dbReference type="OMA" id="HHSACET"/>
<dbReference type="OrthoDB" id="6159439at2759"/>
<dbReference type="PAN-GO" id="Q9H2W2">
    <property type="GO annotations" value="4 GO annotations based on evolutionary models"/>
</dbReference>
<dbReference type="PhylomeDB" id="Q9H2W2"/>
<dbReference type="TreeFam" id="TF334098"/>
<dbReference type="PathwayCommons" id="Q9H2W2"/>
<dbReference type="Reactome" id="R-HSA-9754189">
    <property type="pathway name" value="Germ layer formation at gastrulation"/>
</dbReference>
<dbReference type="Reactome" id="R-HSA-9823730">
    <property type="pathway name" value="Formation of definitive endoderm"/>
</dbReference>
<dbReference type="SignaLink" id="Q9H2W2"/>
<dbReference type="BioGRID-ORCS" id="83881">
    <property type="hits" value="38 hits in 1176 CRISPR screens"/>
</dbReference>
<dbReference type="GenomeRNAi" id="83881"/>
<dbReference type="Pharos" id="Q9H2W2">
    <property type="development level" value="Tbio"/>
</dbReference>
<dbReference type="PRO" id="PR:Q9H2W2"/>
<dbReference type="Proteomes" id="UP000005640">
    <property type="component" value="Chromosome 1"/>
</dbReference>
<dbReference type="RNAct" id="Q9H2W2">
    <property type="molecule type" value="protein"/>
</dbReference>
<dbReference type="Bgee" id="ENSG00000185155">
    <property type="expression patterns" value="Expressed in oocyte and 85 other cell types or tissues"/>
</dbReference>
<dbReference type="ExpressionAtlas" id="Q9H2W2">
    <property type="expression patterns" value="baseline and differential"/>
</dbReference>
<dbReference type="GO" id="GO:0000785">
    <property type="term" value="C:chromatin"/>
    <property type="evidence" value="ECO:0000250"/>
    <property type="project" value="BHF-UCL"/>
</dbReference>
<dbReference type="GO" id="GO:0005654">
    <property type="term" value="C:nucleoplasm"/>
    <property type="evidence" value="ECO:0000314"/>
    <property type="project" value="HPA"/>
</dbReference>
<dbReference type="GO" id="GO:0000987">
    <property type="term" value="F:cis-regulatory region sequence-specific DNA binding"/>
    <property type="evidence" value="ECO:0000250"/>
    <property type="project" value="BHF-UCL"/>
</dbReference>
<dbReference type="GO" id="GO:0001228">
    <property type="term" value="F:DNA-binding transcription activator activity, RNA polymerase II-specific"/>
    <property type="evidence" value="ECO:0000250"/>
    <property type="project" value="BHF-UCL"/>
</dbReference>
<dbReference type="GO" id="GO:0000981">
    <property type="term" value="F:DNA-binding transcription factor activity, RNA polymerase II-specific"/>
    <property type="evidence" value="ECO:0000247"/>
    <property type="project" value="NTNU_SB"/>
</dbReference>
<dbReference type="GO" id="GO:0042803">
    <property type="term" value="F:protein homodimerization activity"/>
    <property type="evidence" value="ECO:0000250"/>
    <property type="project" value="BHF-UCL"/>
</dbReference>
<dbReference type="GO" id="GO:0000978">
    <property type="term" value="F:RNA polymerase II cis-regulatory region sequence-specific DNA binding"/>
    <property type="evidence" value="ECO:0000250"/>
    <property type="project" value="BHF-UCL"/>
</dbReference>
<dbReference type="GO" id="GO:0061629">
    <property type="term" value="F:RNA polymerase II-specific DNA-binding transcription factor binding"/>
    <property type="evidence" value="ECO:0000353"/>
    <property type="project" value="BHF-UCL"/>
</dbReference>
<dbReference type="GO" id="GO:1990837">
    <property type="term" value="F:sequence-specific double-stranded DNA binding"/>
    <property type="evidence" value="ECO:0000314"/>
    <property type="project" value="ARUK-UCL"/>
</dbReference>
<dbReference type="GO" id="GO:0042074">
    <property type="term" value="P:cell migration involved in gastrulation"/>
    <property type="evidence" value="ECO:0007669"/>
    <property type="project" value="Ensembl"/>
</dbReference>
<dbReference type="GO" id="GO:0048565">
    <property type="term" value="P:digestive tract development"/>
    <property type="evidence" value="ECO:0000250"/>
    <property type="project" value="BHF-UCL"/>
</dbReference>
<dbReference type="GO" id="GO:0007492">
    <property type="term" value="P:endoderm development"/>
    <property type="evidence" value="ECO:0000250"/>
    <property type="project" value="BHF-UCL"/>
</dbReference>
<dbReference type="GO" id="GO:0001706">
    <property type="term" value="P:endoderm formation"/>
    <property type="evidence" value="ECO:0000318"/>
    <property type="project" value="GO_Central"/>
</dbReference>
<dbReference type="GO" id="GO:0035987">
    <property type="term" value="P:endodermal cell differentiation"/>
    <property type="evidence" value="ECO:0000250"/>
    <property type="project" value="BHF-UCL"/>
</dbReference>
<dbReference type="GO" id="GO:0007369">
    <property type="term" value="P:gastrulation"/>
    <property type="evidence" value="ECO:0000250"/>
    <property type="project" value="BHF-UCL"/>
</dbReference>
<dbReference type="GO" id="GO:0007507">
    <property type="term" value="P:heart development"/>
    <property type="evidence" value="ECO:0000250"/>
    <property type="project" value="BHF-UCL"/>
</dbReference>
<dbReference type="GO" id="GO:0002244">
    <property type="term" value="P:hematopoietic progenitor cell differentiation"/>
    <property type="evidence" value="ECO:0000250"/>
    <property type="project" value="BHF-UCL"/>
</dbReference>
<dbReference type="GO" id="GO:1901533">
    <property type="term" value="P:negative regulation of hematopoietic progenitor cell differentiation"/>
    <property type="evidence" value="ECO:0000250"/>
    <property type="project" value="BHF-UCL"/>
</dbReference>
<dbReference type="GO" id="GO:2000382">
    <property type="term" value="P:positive regulation of mesoderm development"/>
    <property type="evidence" value="ECO:0000250"/>
    <property type="project" value="BHF-UCL"/>
</dbReference>
<dbReference type="GO" id="GO:0045944">
    <property type="term" value="P:positive regulation of transcription by RNA polymerase II"/>
    <property type="evidence" value="ECO:0000250"/>
    <property type="project" value="BHF-UCL"/>
</dbReference>
<dbReference type="GO" id="GO:0006357">
    <property type="term" value="P:regulation of transcription by RNA polymerase II"/>
    <property type="evidence" value="ECO:0000318"/>
    <property type="project" value="GO_Central"/>
</dbReference>
<dbReference type="CDD" id="cd00086">
    <property type="entry name" value="homeodomain"/>
    <property type="match status" value="1"/>
</dbReference>
<dbReference type="FunFam" id="1.10.10.60:FF:000329">
    <property type="entry name" value="Mix paired-like homeobox"/>
    <property type="match status" value="1"/>
</dbReference>
<dbReference type="Gene3D" id="1.10.10.60">
    <property type="entry name" value="Homeodomain-like"/>
    <property type="match status" value="1"/>
</dbReference>
<dbReference type="InterPro" id="IPR001356">
    <property type="entry name" value="HD"/>
</dbReference>
<dbReference type="InterPro" id="IPR017970">
    <property type="entry name" value="Homeobox_CS"/>
</dbReference>
<dbReference type="InterPro" id="IPR009057">
    <property type="entry name" value="Homeodomain-like_sf"/>
</dbReference>
<dbReference type="InterPro" id="IPR042917">
    <property type="entry name" value="MIXL1"/>
</dbReference>
<dbReference type="PANTHER" id="PTHR47656">
    <property type="entry name" value="HOMEOBOX PROTEIN MIXL"/>
    <property type="match status" value="1"/>
</dbReference>
<dbReference type="PANTHER" id="PTHR47656:SF1">
    <property type="entry name" value="HOMEOBOX PROTEIN MIXL1"/>
    <property type="match status" value="1"/>
</dbReference>
<dbReference type="Pfam" id="PF00046">
    <property type="entry name" value="Homeodomain"/>
    <property type="match status" value="1"/>
</dbReference>
<dbReference type="SMART" id="SM00389">
    <property type="entry name" value="HOX"/>
    <property type="match status" value="1"/>
</dbReference>
<dbReference type="SUPFAM" id="SSF46689">
    <property type="entry name" value="Homeodomain-like"/>
    <property type="match status" value="1"/>
</dbReference>
<dbReference type="PROSITE" id="PS00027">
    <property type="entry name" value="HOMEOBOX_1"/>
    <property type="match status" value="1"/>
</dbReference>
<dbReference type="PROSITE" id="PS50071">
    <property type="entry name" value="HOMEOBOX_2"/>
    <property type="match status" value="1"/>
</dbReference>
<keyword id="KW-0025">Alternative splicing</keyword>
<keyword id="KW-0217">Developmental protein</keyword>
<keyword id="KW-0221">Differentiation</keyword>
<keyword id="KW-0238">DNA-binding</keyword>
<keyword id="KW-0371">Homeobox</keyword>
<keyword id="KW-0539">Nucleus</keyword>
<keyword id="KW-0597">Phosphoprotein</keyword>
<keyword id="KW-1267">Proteomics identification</keyword>
<keyword id="KW-1185">Reference proteome</keyword>
<keyword id="KW-0804">Transcription</keyword>
<keyword id="KW-0805">Transcription regulation</keyword>
<sequence>MATAESRALQFAEGAAFPAYRAPHAGGALLPPPSPAAALLPAPPAGPGPATFAGFLGRDPGPAPPPPASLGSPAPPKGAAAPSASQRRKRTSFSAEQLQLLELVFRRTRYPDIHLRERLAALTLLPESRIQVWFQNRRAKSRRQSGKSFQPLARPEIILNHCAPGTETKCLKPQLPLEVDVNCLPEPNGVGGGISDSSSQGQNFETCSPLSEDIGSKLDSWEEHIFSAFGNF</sequence>
<evidence type="ECO:0000250" key="1"/>
<evidence type="ECO:0000255" key="2">
    <source>
        <dbReference type="PROSITE-ProRule" id="PRU00108"/>
    </source>
</evidence>
<evidence type="ECO:0000256" key="3">
    <source>
        <dbReference type="SAM" id="MobiDB-lite"/>
    </source>
</evidence>
<evidence type="ECO:0000269" key="4">
    <source>
    </source>
</evidence>
<evidence type="ECO:0000269" key="5">
    <source>
    </source>
</evidence>
<evidence type="ECO:0000269" key="6">
    <source>
    </source>
</evidence>
<evidence type="ECO:0000269" key="7">
    <source>
    </source>
</evidence>
<evidence type="ECO:0000303" key="8">
    <source>
    </source>
</evidence>
<evidence type="ECO:0000305" key="9"/>
<organism>
    <name type="scientific">Homo sapiens</name>
    <name type="common">Human</name>
    <dbReference type="NCBI Taxonomy" id="9606"/>
    <lineage>
        <taxon>Eukaryota</taxon>
        <taxon>Metazoa</taxon>
        <taxon>Chordata</taxon>
        <taxon>Craniata</taxon>
        <taxon>Vertebrata</taxon>
        <taxon>Euteleostomi</taxon>
        <taxon>Mammalia</taxon>
        <taxon>Eutheria</taxon>
        <taxon>Euarchontoglires</taxon>
        <taxon>Primates</taxon>
        <taxon>Haplorrhini</taxon>
        <taxon>Catarrhini</taxon>
        <taxon>Hominidae</taxon>
        <taxon>Homo</taxon>
    </lineage>
</organism>
<gene>
    <name type="primary">MIXL1</name>
    <name type="synonym">MIXL</name>
</gene>
<reference key="1">
    <citation type="journal article" date="2002" name="Blood">
        <title>A human Mix-like homeobox gene MIXL shows functional similarity to Xenopus Mix.1.</title>
        <authorList>
            <person name="Guo W."/>
            <person name="Chan A.P."/>
            <person name="Liang H."/>
            <person name="Wieder E.D."/>
            <person name="Molldrem J.J."/>
            <person name="Etkin L.D."/>
            <person name="Nagarajan L."/>
        </authorList>
    </citation>
    <scope>NUCLEOTIDE SEQUENCE [MRNA] (ISOFORM 1)</scope>
    <scope>SUBCELLULAR LOCATION</scope>
    <scope>TISSUE SPECIFICITY</scope>
</reference>
<reference key="2">
    <citation type="journal article" date="2000" name="Dev. Dyn.">
        <title>Cloning, expression analysis, and chromosomal localization of murine and human homologues of a Xenopus mix gene.</title>
        <authorList>
            <person name="Robb L."/>
            <person name="Hartley L."/>
            <person name="Begley C.G."/>
            <person name="Brodnicki T.C."/>
            <person name="Copeland N.G."/>
            <person name="Gilbert D.J."/>
            <person name="Jenkins N.A."/>
            <person name="Elefanty A.G."/>
        </authorList>
    </citation>
    <scope>NUCLEOTIDE SEQUENCE [GENOMIC DNA]</scope>
</reference>
<reference key="3">
    <citation type="journal article" date="2006" name="Nature">
        <title>The DNA sequence and biological annotation of human chromosome 1.</title>
        <authorList>
            <person name="Gregory S.G."/>
            <person name="Barlow K.F."/>
            <person name="McLay K.E."/>
            <person name="Kaul R."/>
            <person name="Swarbreck D."/>
            <person name="Dunham A."/>
            <person name="Scott C.E."/>
            <person name="Howe K.L."/>
            <person name="Woodfine K."/>
            <person name="Spencer C.C.A."/>
            <person name="Jones M.C."/>
            <person name="Gillson C."/>
            <person name="Searle S."/>
            <person name="Zhou Y."/>
            <person name="Kokocinski F."/>
            <person name="McDonald L."/>
            <person name="Evans R."/>
            <person name="Phillips K."/>
            <person name="Atkinson A."/>
            <person name="Cooper R."/>
            <person name="Jones C."/>
            <person name="Hall R.E."/>
            <person name="Andrews T.D."/>
            <person name="Lloyd C."/>
            <person name="Ainscough R."/>
            <person name="Almeida J.P."/>
            <person name="Ambrose K.D."/>
            <person name="Anderson F."/>
            <person name="Andrew R.W."/>
            <person name="Ashwell R.I.S."/>
            <person name="Aubin K."/>
            <person name="Babbage A.K."/>
            <person name="Bagguley C.L."/>
            <person name="Bailey J."/>
            <person name="Beasley H."/>
            <person name="Bethel G."/>
            <person name="Bird C.P."/>
            <person name="Bray-Allen S."/>
            <person name="Brown J.Y."/>
            <person name="Brown A.J."/>
            <person name="Buckley D."/>
            <person name="Burton J."/>
            <person name="Bye J."/>
            <person name="Carder C."/>
            <person name="Chapman J.C."/>
            <person name="Clark S.Y."/>
            <person name="Clarke G."/>
            <person name="Clee C."/>
            <person name="Cobley V."/>
            <person name="Collier R.E."/>
            <person name="Corby N."/>
            <person name="Coville G.J."/>
            <person name="Davies J."/>
            <person name="Deadman R."/>
            <person name="Dunn M."/>
            <person name="Earthrowl M."/>
            <person name="Ellington A.G."/>
            <person name="Errington H."/>
            <person name="Frankish A."/>
            <person name="Frankland J."/>
            <person name="French L."/>
            <person name="Garner P."/>
            <person name="Garnett J."/>
            <person name="Gay L."/>
            <person name="Ghori M.R.J."/>
            <person name="Gibson R."/>
            <person name="Gilby L.M."/>
            <person name="Gillett W."/>
            <person name="Glithero R.J."/>
            <person name="Grafham D.V."/>
            <person name="Griffiths C."/>
            <person name="Griffiths-Jones S."/>
            <person name="Grocock R."/>
            <person name="Hammond S."/>
            <person name="Harrison E.S.I."/>
            <person name="Hart E."/>
            <person name="Haugen E."/>
            <person name="Heath P.D."/>
            <person name="Holmes S."/>
            <person name="Holt K."/>
            <person name="Howden P.J."/>
            <person name="Hunt A.R."/>
            <person name="Hunt S.E."/>
            <person name="Hunter G."/>
            <person name="Isherwood J."/>
            <person name="James R."/>
            <person name="Johnson C."/>
            <person name="Johnson D."/>
            <person name="Joy A."/>
            <person name="Kay M."/>
            <person name="Kershaw J.K."/>
            <person name="Kibukawa M."/>
            <person name="Kimberley A.M."/>
            <person name="King A."/>
            <person name="Knights A.J."/>
            <person name="Lad H."/>
            <person name="Laird G."/>
            <person name="Lawlor S."/>
            <person name="Leongamornlert D.A."/>
            <person name="Lloyd D.M."/>
            <person name="Loveland J."/>
            <person name="Lovell J."/>
            <person name="Lush M.J."/>
            <person name="Lyne R."/>
            <person name="Martin S."/>
            <person name="Mashreghi-Mohammadi M."/>
            <person name="Matthews L."/>
            <person name="Matthews N.S.W."/>
            <person name="McLaren S."/>
            <person name="Milne S."/>
            <person name="Mistry S."/>
            <person name="Moore M.J.F."/>
            <person name="Nickerson T."/>
            <person name="O'Dell C.N."/>
            <person name="Oliver K."/>
            <person name="Palmeiri A."/>
            <person name="Palmer S.A."/>
            <person name="Parker A."/>
            <person name="Patel D."/>
            <person name="Pearce A.V."/>
            <person name="Peck A.I."/>
            <person name="Pelan S."/>
            <person name="Phelps K."/>
            <person name="Phillimore B.J."/>
            <person name="Plumb R."/>
            <person name="Rajan J."/>
            <person name="Raymond C."/>
            <person name="Rouse G."/>
            <person name="Saenphimmachak C."/>
            <person name="Sehra H.K."/>
            <person name="Sheridan E."/>
            <person name="Shownkeen R."/>
            <person name="Sims S."/>
            <person name="Skuce C.D."/>
            <person name="Smith M."/>
            <person name="Steward C."/>
            <person name="Subramanian S."/>
            <person name="Sycamore N."/>
            <person name="Tracey A."/>
            <person name="Tromans A."/>
            <person name="Van Helmond Z."/>
            <person name="Wall M."/>
            <person name="Wallis J.M."/>
            <person name="White S."/>
            <person name="Whitehead S.L."/>
            <person name="Wilkinson J.E."/>
            <person name="Willey D.L."/>
            <person name="Williams H."/>
            <person name="Wilming L."/>
            <person name="Wray P.W."/>
            <person name="Wu Z."/>
            <person name="Coulson A."/>
            <person name="Vaudin M."/>
            <person name="Sulston J.E."/>
            <person name="Durbin R.M."/>
            <person name="Hubbard T."/>
            <person name="Wooster R."/>
            <person name="Dunham I."/>
            <person name="Carter N.P."/>
            <person name="McVean G."/>
            <person name="Ross M.T."/>
            <person name="Harrow J."/>
            <person name="Olson M.V."/>
            <person name="Beck S."/>
            <person name="Rogers J."/>
            <person name="Bentley D.R."/>
        </authorList>
    </citation>
    <scope>NUCLEOTIDE SEQUENCE [LARGE SCALE GENOMIC DNA]</scope>
</reference>
<reference key="4">
    <citation type="submission" date="2005-07" db="EMBL/GenBank/DDBJ databases">
        <authorList>
            <person name="Mural R.J."/>
            <person name="Istrail S."/>
            <person name="Sutton G.G."/>
            <person name="Florea L."/>
            <person name="Halpern A.L."/>
            <person name="Mobarry C.M."/>
            <person name="Lippert R."/>
            <person name="Walenz B."/>
            <person name="Shatkay H."/>
            <person name="Dew I."/>
            <person name="Miller J.R."/>
            <person name="Flanigan M.J."/>
            <person name="Edwards N.J."/>
            <person name="Bolanos R."/>
            <person name="Fasulo D."/>
            <person name="Halldorsson B.V."/>
            <person name="Hannenhalli S."/>
            <person name="Turner R."/>
            <person name="Yooseph S."/>
            <person name="Lu F."/>
            <person name="Nusskern D.R."/>
            <person name="Shue B.C."/>
            <person name="Zheng X.H."/>
            <person name="Zhong F."/>
            <person name="Delcher A.L."/>
            <person name="Huson D.H."/>
            <person name="Kravitz S.A."/>
            <person name="Mouchard L."/>
            <person name="Reinert K."/>
            <person name="Remington K.A."/>
            <person name="Clark A.G."/>
            <person name="Waterman M.S."/>
            <person name="Eichler E.E."/>
            <person name="Adams M.D."/>
            <person name="Hunkapiller M.W."/>
            <person name="Myers E.W."/>
            <person name="Venter J.C."/>
        </authorList>
    </citation>
    <scope>NUCLEOTIDE SEQUENCE [LARGE SCALE GENOMIC DNA]</scope>
</reference>
<reference key="5">
    <citation type="journal article" date="2004" name="Genome Res.">
        <title>The status, quality, and expansion of the NIH full-length cDNA project: the Mammalian Gene Collection (MGC).</title>
        <authorList>
            <consortium name="The MGC Project Team"/>
        </authorList>
    </citation>
    <scope>NUCLEOTIDE SEQUENCE [LARGE SCALE MRNA] (ISOFORMS 1 AND 2)</scope>
    <source>
        <tissue>Brain</tissue>
    </source>
</reference>
<reference key="6">
    <citation type="journal article" date="2005" name="Stem Cells Dev.">
        <title>Mixl1 and oct4 proteins are transiently co-expressed in differentiating mouse and human embryonic stem cells.</title>
        <authorList>
            <person name="Mossman A.K."/>
            <person name="Sourris K."/>
            <person name="Ng E."/>
            <person name="Stanley E.G."/>
            <person name="Elefanty A.G."/>
        </authorList>
    </citation>
    <scope>TISSUE SPECIFICITY</scope>
</reference>
<reference key="7">
    <citation type="journal article" date="2006" name="J. Mol. Signal.">
        <title>Amino terminal tyrosine phosphorylation of human MIXL1.</title>
        <authorList>
            <person name="Guo W."/>
            <person name="Nagarajan L."/>
        </authorList>
    </citation>
    <scope>PHOSPHORYLATION AT TYR-20</scope>
</reference>
<reference key="8">
    <citation type="journal article" date="2007" name="Hum. Pathol.">
        <title>Differential expression of the human MIXL1 gene product in non-Hodgkin and Hodgkin lymphomas.</title>
        <authorList>
            <person name="Drakos E."/>
            <person name="Rassidakis G.Z."/>
            <person name="Leventaki V."/>
            <person name="Guo W."/>
            <person name="Medeiros L.J."/>
            <person name="Nagarajan L."/>
        </authorList>
    </citation>
    <scope>SUBCELLULAR LOCATION</scope>
    <scope>TISSUE SPECIFICITY</scope>
</reference>
<accession>Q9H2W2</accession>
<accession>B7ZLF9</accession>
<comment type="function">
    <text evidence="1">Transcription factor that play a central role in proper axial mesendoderm morphogenesis and endoderm formation. Required for efficient differentiation of cells from the primitive streak stage to blood, by acting early in the recruitment and/or expansion of mesodermal progenitors to the hemangioblastic and hematopoietic lineages. Also involved in the morphogenesis of the heart and the gut during embryogenesis. Acts as a negative regulator of brachyury expression (By similarity).</text>
</comment>
<comment type="subcellular location">
    <subcellularLocation>
        <location evidence="2 4 7">Nucleus</location>
    </subcellularLocation>
</comment>
<comment type="alternative products">
    <event type="alternative splicing"/>
    <isoform>
        <id>Q9H2W2-1</id>
        <name>1</name>
        <sequence type="displayed"/>
    </isoform>
    <isoform>
        <id>Q9H2W2-2</id>
        <name>2</name>
        <sequence type="described" ref="VSP_054305"/>
    </isoform>
</comment>
<comment type="tissue specificity">
    <text evidence="4 5 7">Restricted to progenitors and secondary lymph tissues. In normal hematopoiesis, it is restricted to immature B- and T-lymphoid cells. Present in differentiating embryonic stem cells (at protein level).</text>
</comment>
<comment type="PTM">
    <text evidence="6">Phosphorylated at multiple sites.</text>
</comment>
<comment type="similarity">
    <text evidence="9">Belongs to the paired homeobox family.</text>
</comment>
<comment type="online information" name="Atlas of Genetics and Cytogenetics in Oncology and Haematology">
    <link uri="https://atlasgeneticsoncology.org/gene/47624/MIXL1"/>
</comment>
<protein>
    <recommendedName>
        <fullName>Homeobox protein MIXL1</fullName>
    </recommendedName>
    <alternativeName>
        <fullName>Homeodomain protein MIX</fullName>
        <shortName>hMix</shortName>
    </alternativeName>
    <alternativeName>
        <fullName>MIX1 homeobox-like protein 1</fullName>
    </alternativeName>
    <alternativeName>
        <fullName>Mix.1 homeobox-like protein</fullName>
    </alternativeName>
</protein>
<name>MIXL1_HUMAN</name>
<feature type="chain" id="PRO_0000311333" description="Homeobox protein MIXL1">
    <location>
        <begin position="1"/>
        <end position="232"/>
    </location>
</feature>
<feature type="DNA-binding region" description="Homeobox" evidence="2">
    <location>
        <begin position="86"/>
        <end position="145"/>
    </location>
</feature>
<feature type="region of interest" description="Disordered" evidence="3">
    <location>
        <begin position="22"/>
        <end position="92"/>
    </location>
</feature>
<feature type="compositionally biased region" description="Pro residues" evidence="3">
    <location>
        <begin position="30"/>
        <end position="47"/>
    </location>
</feature>
<feature type="compositionally biased region" description="Low complexity" evidence="3">
    <location>
        <begin position="48"/>
        <end position="57"/>
    </location>
</feature>
<feature type="compositionally biased region" description="Pro residues" evidence="3">
    <location>
        <begin position="61"/>
        <end position="76"/>
    </location>
</feature>
<feature type="modified residue" description="Phosphotyrosine" evidence="6">
    <location>
        <position position="20"/>
    </location>
</feature>
<feature type="splice variant" id="VSP_054305" description="In isoform 2." evidence="8">
    <original>I</original>
    <variation>IQLLFSPLF</variation>
    <location>
        <position position="130"/>
    </location>
</feature>